<proteinExistence type="evidence at protein level"/>
<comment type="function">
    <text evidence="1">One of the components of the core complex of photosystem II (PSII). It binds chlorophyll and helps catalyze the primary light-induced photochemical processes of PSII. PSII is a light-driven water:plastoquinone oxidoreductase, using light energy to abstract electrons from H(2)O, generating O(2) and a proton gradient subsequently used for ATP formation.</text>
</comment>
<comment type="cofactor">
    <text evidence="1">Binds multiple chlorophylls and provides some of the ligands for the Ca-4Mn-5O cluster of the oxygen-evolving complex. It may also provide a ligand for a Cl- that is required for oxygen evolution. PSII binds additional chlorophylls, carotenoids and specific lipids.</text>
</comment>
<comment type="subunit">
    <text evidence="1">PSII is composed of 1 copy each of membrane proteins PsbA, PsbB, PsbC, PsbD, PsbE, PsbF, PsbH, PsbI, PsbJ, PsbK, PsbL, PsbM, PsbT, PsbX, PsbY, PsbZ, Psb30/Ycf12, at least 3 peripheral proteins of the oxygen-evolving complex and a large number of cofactors. It forms dimeric complexes.</text>
</comment>
<comment type="subcellular location">
    <subcellularLocation>
        <location evidence="1 2">Plastid</location>
        <location evidence="1 2">Chloroplast thylakoid membrane</location>
        <topology evidence="1">Multi-pass membrane protein</topology>
    </subcellularLocation>
</comment>
<comment type="PTM">
    <text evidence="2">Phosphorylated on threonine residue(s).</text>
</comment>
<comment type="similarity">
    <text evidence="1">Belongs to the PsbB/PsbC family. PsbC subfamily.</text>
</comment>
<comment type="sequence caution" evidence="3">
    <conflict type="erroneous initiation">
        <sequence resource="EMBL-CDS" id="CAA25802"/>
    </conflict>
    <text>Extended N-terminus.</text>
</comment>
<accession>P06414</accession>
<accession>P09360</accession>
<dbReference type="EMBL" id="X04465">
    <property type="protein sequence ID" value="CAA28081.1"/>
    <property type="molecule type" value="Genomic_DNA"/>
</dbReference>
<dbReference type="EMBL" id="X01647">
    <property type="protein sequence ID" value="CAA25802.1"/>
    <property type="status" value="ALT_INIT"/>
    <property type="molecule type" value="Genomic_DNA"/>
</dbReference>
<dbReference type="PIR" id="A03474">
    <property type="entry name" value="F2LV44"/>
</dbReference>
<dbReference type="RefSeq" id="NP_039295.1">
    <property type="nucleotide sequence ID" value="NC_001319.1"/>
</dbReference>
<dbReference type="SMR" id="P06414"/>
<dbReference type="GeneID" id="2702544"/>
<dbReference type="GO" id="GO:0009535">
    <property type="term" value="C:chloroplast thylakoid membrane"/>
    <property type="evidence" value="ECO:0007669"/>
    <property type="project" value="UniProtKB-SubCell"/>
</dbReference>
<dbReference type="GO" id="GO:0009523">
    <property type="term" value="C:photosystem II"/>
    <property type="evidence" value="ECO:0007669"/>
    <property type="project" value="UniProtKB-KW"/>
</dbReference>
<dbReference type="GO" id="GO:0016168">
    <property type="term" value="F:chlorophyll binding"/>
    <property type="evidence" value="ECO:0007669"/>
    <property type="project" value="UniProtKB-UniRule"/>
</dbReference>
<dbReference type="GO" id="GO:0045156">
    <property type="term" value="F:electron transporter, transferring electrons within the cyclic electron transport pathway of photosynthesis activity"/>
    <property type="evidence" value="ECO:0007669"/>
    <property type="project" value="InterPro"/>
</dbReference>
<dbReference type="GO" id="GO:0046872">
    <property type="term" value="F:metal ion binding"/>
    <property type="evidence" value="ECO:0007669"/>
    <property type="project" value="UniProtKB-KW"/>
</dbReference>
<dbReference type="GO" id="GO:0009772">
    <property type="term" value="P:photosynthetic electron transport in photosystem II"/>
    <property type="evidence" value="ECO:0007669"/>
    <property type="project" value="InterPro"/>
</dbReference>
<dbReference type="FunFam" id="1.10.10.670:FF:000001">
    <property type="entry name" value="Photosystem II CP43 reaction center protein"/>
    <property type="match status" value="1"/>
</dbReference>
<dbReference type="Gene3D" id="1.10.10.670">
    <property type="entry name" value="photosystem ii from thermosynechococcus elongatus"/>
    <property type="match status" value="1"/>
</dbReference>
<dbReference type="HAMAP" id="MF_01496">
    <property type="entry name" value="PSII_PsbC_CP43"/>
    <property type="match status" value="1"/>
</dbReference>
<dbReference type="InterPro" id="IPR000932">
    <property type="entry name" value="PS_antenna-like"/>
</dbReference>
<dbReference type="InterPro" id="IPR036001">
    <property type="entry name" value="PS_II_antenna-like_sf"/>
</dbReference>
<dbReference type="InterPro" id="IPR005869">
    <property type="entry name" value="PSII_PsbC"/>
</dbReference>
<dbReference type="InterPro" id="IPR044900">
    <property type="entry name" value="PSII_PsbC_sf"/>
</dbReference>
<dbReference type="NCBIfam" id="TIGR01153">
    <property type="entry name" value="psbC"/>
    <property type="match status" value="1"/>
</dbReference>
<dbReference type="Pfam" id="PF00421">
    <property type="entry name" value="PSII"/>
    <property type="match status" value="1"/>
</dbReference>
<dbReference type="SUPFAM" id="SSF161077">
    <property type="entry name" value="Photosystem II antenna protein-like"/>
    <property type="match status" value="1"/>
</dbReference>
<evidence type="ECO:0000255" key="1">
    <source>
        <dbReference type="HAMAP-Rule" id="MF_01496"/>
    </source>
</evidence>
<evidence type="ECO:0000269" key="2">
    <source>
    </source>
</evidence>
<evidence type="ECO:0000305" key="3"/>
<name>PSBC_MARPO</name>
<sequence length="473" mass="51786">MKILYSQRRFYPVETLFNGTLALGGRDQETTGFAWWAGNARLINLSGKLLGAHVAHAGLIVFWAGAMNLFEVAHFVPEKPMYEQGLILLPHLATLGWGVGPGGEIVDTFPYFVSGVLHLISSAVLGFGGIYHALIGPETLEESFPFFGYVWKDKNKMTTILGIHLILLGAGAFLLVFKALYFGGIYDTWAPGGGDVRKITNLTLSPGVIFGYLLKSPFGGEGWIVSVDNLEDIIGGHVWLGSICIFGGIWHILTKPFAWARRALVWSGEAYLSYSLGAIAVFGFIACCFVWFNNTAYPSEFYGPTGPEASQAQAFTFLVRDQRLGANVGSAQGPTGLGKYIMRSPTGEIIFGGETMRFWDLRAPWLEPLRGPNGLDLSKLKKDIQPWQERRSAEYMTHAPLGSLNSVGGVATEINAVNYVSPRSWLATSHFVLGFFFFVGHLWHAGRARAAAAGFEKGIDRDFEPVLSMTPLN</sequence>
<protein>
    <recommendedName>
        <fullName evidence="1">Photosystem II CP43 reaction center protein</fullName>
    </recommendedName>
    <alternativeName>
        <fullName evidence="1">PSII 43 kDa protein</fullName>
    </alternativeName>
    <alternativeName>
        <fullName evidence="1">Protein CP-43</fullName>
    </alternativeName>
</protein>
<feature type="propeptide" id="PRO_0000431165" evidence="1">
    <location>
        <begin position="1"/>
        <end position="14"/>
    </location>
</feature>
<feature type="chain" id="PRO_0000077519" description="Photosystem II CP43 reaction center protein" evidence="1">
    <location>
        <begin position="15"/>
        <end position="473"/>
    </location>
</feature>
<feature type="transmembrane region" description="Helical" evidence="1">
    <location>
        <begin position="69"/>
        <end position="93"/>
    </location>
</feature>
<feature type="transmembrane region" description="Helical" evidence="1">
    <location>
        <begin position="134"/>
        <end position="155"/>
    </location>
</feature>
<feature type="transmembrane region" description="Helical" evidence="1">
    <location>
        <begin position="178"/>
        <end position="200"/>
    </location>
</feature>
<feature type="transmembrane region" description="Helical" evidence="1">
    <location>
        <begin position="255"/>
        <end position="275"/>
    </location>
</feature>
<feature type="transmembrane region" description="Helical" evidence="1">
    <location>
        <begin position="291"/>
        <end position="312"/>
    </location>
</feature>
<feature type="transmembrane region" description="Helical" evidence="1">
    <location>
        <begin position="447"/>
        <end position="471"/>
    </location>
</feature>
<feature type="binding site" evidence="1">
    <location>
        <position position="367"/>
    </location>
    <ligand>
        <name>[CaMn4O5] cluster</name>
        <dbReference type="ChEBI" id="CHEBI:189552"/>
    </ligand>
</feature>
<feature type="modified residue" description="N-acetylthreonine" evidence="1">
    <location>
        <position position="15"/>
    </location>
</feature>
<feature type="modified residue" description="Phosphothreonine" evidence="1">
    <location>
        <position position="15"/>
    </location>
</feature>
<gene>
    <name evidence="1" type="primary">psbC</name>
</gene>
<keyword id="KW-0007">Acetylation</keyword>
<keyword id="KW-0148">Chlorophyll</keyword>
<keyword id="KW-0150">Chloroplast</keyword>
<keyword id="KW-0157">Chromophore</keyword>
<keyword id="KW-0464">Manganese</keyword>
<keyword id="KW-0472">Membrane</keyword>
<keyword id="KW-0479">Metal-binding</keyword>
<keyword id="KW-0597">Phosphoprotein</keyword>
<keyword id="KW-0602">Photosynthesis</keyword>
<keyword id="KW-0604">Photosystem II</keyword>
<keyword id="KW-0934">Plastid</keyword>
<keyword id="KW-0793">Thylakoid</keyword>
<keyword id="KW-0812">Transmembrane</keyword>
<keyword id="KW-1133">Transmembrane helix</keyword>
<geneLocation type="chloroplast"/>
<reference key="1">
    <citation type="journal article" date="1984" name="Nucleic Acids Res.">
        <title>Nucleotide sequence of Marchantia polymorpha chloroplast DNA: a region possibly encoding three tRNAs and three proteins including a homologue of E. coli ribosomal protein S14.</title>
        <authorList>
            <person name="Umesono K."/>
            <person name="Inokuchi H."/>
            <person name="Ohyama K."/>
            <person name="Ozeki H."/>
        </authorList>
    </citation>
    <scope>NUCLEOTIDE SEQUENCE [GENOMIC DNA]</scope>
</reference>
<reference key="2">
    <citation type="journal article" date="1998" name="FEBS Lett.">
        <title>Thylakoid protein phosphorylation in evolutionally divergent species with oxygenic photosynthesis.</title>
        <authorList>
            <person name="Pursiheimo S."/>
            <person name="Rintamaeki E."/>
            <person name="Baena-Gonzalez E."/>
            <person name="Aro E.-M."/>
        </authorList>
    </citation>
    <scope>SUBCELLULAR LOCATION</scope>
    <scope>PHOSPHORYLATION</scope>
</reference>
<reference key="3">
    <citation type="journal article" date="1986" name="Nature">
        <title>Chloroplast gene organization deduced from complete sequence of liverwort Marchantia polymorpha chloroplast DNA.</title>
        <authorList>
            <person name="Ohyama K."/>
            <person name="Fukuzawa H."/>
            <person name="Kohchi T."/>
            <person name="Shirai H."/>
            <person name="Sano T."/>
            <person name="Sano S."/>
            <person name="Umesono K."/>
            <person name="Shiki Y."/>
            <person name="Takeuchi M."/>
            <person name="Chang Z."/>
            <person name="Aota S."/>
            <person name="Inokuchi H."/>
            <person name="Ozeki H."/>
        </authorList>
    </citation>
    <scope>NUCLEOTIDE SEQUENCE [LARGE SCALE GENOMIC DNA]</scope>
</reference>
<reference key="4">
    <citation type="journal article" date="1988" name="J. Mol. Biol.">
        <title>Structure and organization of Marchantia polymorpha chloroplast genome. II. Gene organization of the large single copy region from rps'12 to atpB.</title>
        <authorList>
            <person name="Umesono K."/>
            <person name="Inokuchi H."/>
            <person name="Shiki Y."/>
            <person name="Takeuchi M."/>
            <person name="Chang Z."/>
            <person name="Fukuzawa H."/>
            <person name="Kohchi T."/>
            <person name="Shirai H."/>
            <person name="Ohyama K."/>
            <person name="Ozeki H."/>
        </authorList>
    </citation>
    <scope>NUCLEOTIDE SEQUENCE [GENOMIC DNA]</scope>
</reference>
<organism>
    <name type="scientific">Marchantia polymorpha</name>
    <name type="common">Common liverwort</name>
    <name type="synonym">Marchantia aquatica</name>
    <dbReference type="NCBI Taxonomy" id="3197"/>
    <lineage>
        <taxon>Eukaryota</taxon>
        <taxon>Viridiplantae</taxon>
        <taxon>Streptophyta</taxon>
        <taxon>Embryophyta</taxon>
        <taxon>Marchantiophyta</taxon>
        <taxon>Marchantiopsida</taxon>
        <taxon>Marchantiidae</taxon>
        <taxon>Marchantiales</taxon>
        <taxon>Marchantiaceae</taxon>
        <taxon>Marchantia</taxon>
    </lineage>
</organism>